<sequence>MAHIEKQAGELQEKLIAVNRVSKTVKGGRIFSFTALTVVGDGNGRVGFGYGKAREVPAAIQKAMEKARRNMINVALNNGTLQHPVKGVHTGSRVFMQPASEGTGIIAGGAMRAVLEVAGVHNVLAKAYGSTNPINVVRATIDGLENMNSPEMVAAKRGKSVEEILGK</sequence>
<keyword id="KW-1185">Reference proteome</keyword>
<keyword id="KW-0687">Ribonucleoprotein</keyword>
<keyword id="KW-0689">Ribosomal protein</keyword>
<keyword id="KW-0694">RNA-binding</keyword>
<keyword id="KW-0699">rRNA-binding</keyword>
<accession>Q3YWV6</accession>
<dbReference type="EMBL" id="CP000038">
    <property type="protein sequence ID" value="AAZ90006.1"/>
    <property type="molecule type" value="Genomic_DNA"/>
</dbReference>
<dbReference type="RefSeq" id="WP_000940121.1">
    <property type="nucleotide sequence ID" value="NC_007384.1"/>
</dbReference>
<dbReference type="SMR" id="Q3YWV6"/>
<dbReference type="GeneID" id="93778684"/>
<dbReference type="KEGG" id="ssn:SSON_3444"/>
<dbReference type="HOGENOM" id="CLU_065898_2_2_6"/>
<dbReference type="Proteomes" id="UP000002529">
    <property type="component" value="Chromosome"/>
</dbReference>
<dbReference type="GO" id="GO:0015935">
    <property type="term" value="C:small ribosomal subunit"/>
    <property type="evidence" value="ECO:0007669"/>
    <property type="project" value="InterPro"/>
</dbReference>
<dbReference type="GO" id="GO:0019843">
    <property type="term" value="F:rRNA binding"/>
    <property type="evidence" value="ECO:0007669"/>
    <property type="project" value="UniProtKB-UniRule"/>
</dbReference>
<dbReference type="GO" id="GO:0003735">
    <property type="term" value="F:structural constituent of ribosome"/>
    <property type="evidence" value="ECO:0007669"/>
    <property type="project" value="InterPro"/>
</dbReference>
<dbReference type="GO" id="GO:0006412">
    <property type="term" value="P:translation"/>
    <property type="evidence" value="ECO:0007669"/>
    <property type="project" value="UniProtKB-UniRule"/>
</dbReference>
<dbReference type="FunFam" id="3.30.160.20:FF:000001">
    <property type="entry name" value="30S ribosomal protein S5"/>
    <property type="match status" value="1"/>
</dbReference>
<dbReference type="FunFam" id="3.30.230.10:FF:000002">
    <property type="entry name" value="30S ribosomal protein S5"/>
    <property type="match status" value="1"/>
</dbReference>
<dbReference type="Gene3D" id="3.30.160.20">
    <property type="match status" value="1"/>
</dbReference>
<dbReference type="Gene3D" id="3.30.230.10">
    <property type="match status" value="1"/>
</dbReference>
<dbReference type="HAMAP" id="MF_01307_B">
    <property type="entry name" value="Ribosomal_uS5_B"/>
    <property type="match status" value="1"/>
</dbReference>
<dbReference type="InterPro" id="IPR020568">
    <property type="entry name" value="Ribosomal_Su5_D2-typ_SF"/>
</dbReference>
<dbReference type="InterPro" id="IPR000851">
    <property type="entry name" value="Ribosomal_uS5"/>
</dbReference>
<dbReference type="InterPro" id="IPR005712">
    <property type="entry name" value="Ribosomal_uS5_bac-type"/>
</dbReference>
<dbReference type="InterPro" id="IPR005324">
    <property type="entry name" value="Ribosomal_uS5_C"/>
</dbReference>
<dbReference type="InterPro" id="IPR013810">
    <property type="entry name" value="Ribosomal_uS5_N"/>
</dbReference>
<dbReference type="InterPro" id="IPR018192">
    <property type="entry name" value="Ribosomal_uS5_N_CS"/>
</dbReference>
<dbReference type="InterPro" id="IPR014721">
    <property type="entry name" value="Ribsml_uS5_D2-typ_fold_subgr"/>
</dbReference>
<dbReference type="NCBIfam" id="TIGR01021">
    <property type="entry name" value="rpsE_bact"/>
    <property type="match status" value="1"/>
</dbReference>
<dbReference type="PANTHER" id="PTHR48277">
    <property type="entry name" value="MITOCHONDRIAL RIBOSOMAL PROTEIN S5"/>
    <property type="match status" value="1"/>
</dbReference>
<dbReference type="PANTHER" id="PTHR48277:SF1">
    <property type="entry name" value="MITOCHONDRIAL RIBOSOMAL PROTEIN S5"/>
    <property type="match status" value="1"/>
</dbReference>
<dbReference type="Pfam" id="PF00333">
    <property type="entry name" value="Ribosomal_S5"/>
    <property type="match status" value="1"/>
</dbReference>
<dbReference type="Pfam" id="PF03719">
    <property type="entry name" value="Ribosomal_S5_C"/>
    <property type="match status" value="1"/>
</dbReference>
<dbReference type="SUPFAM" id="SSF54768">
    <property type="entry name" value="dsRNA-binding domain-like"/>
    <property type="match status" value="1"/>
</dbReference>
<dbReference type="SUPFAM" id="SSF54211">
    <property type="entry name" value="Ribosomal protein S5 domain 2-like"/>
    <property type="match status" value="1"/>
</dbReference>
<dbReference type="PROSITE" id="PS00585">
    <property type="entry name" value="RIBOSOMAL_S5"/>
    <property type="match status" value="1"/>
</dbReference>
<dbReference type="PROSITE" id="PS50881">
    <property type="entry name" value="S5_DSRBD"/>
    <property type="match status" value="1"/>
</dbReference>
<proteinExistence type="inferred from homology"/>
<reference key="1">
    <citation type="journal article" date="2005" name="Nucleic Acids Res.">
        <title>Genome dynamics and diversity of Shigella species, the etiologic agents of bacillary dysentery.</title>
        <authorList>
            <person name="Yang F."/>
            <person name="Yang J."/>
            <person name="Zhang X."/>
            <person name="Chen L."/>
            <person name="Jiang Y."/>
            <person name="Yan Y."/>
            <person name="Tang X."/>
            <person name="Wang J."/>
            <person name="Xiong Z."/>
            <person name="Dong J."/>
            <person name="Xue Y."/>
            <person name="Zhu Y."/>
            <person name="Xu X."/>
            <person name="Sun L."/>
            <person name="Chen S."/>
            <person name="Nie H."/>
            <person name="Peng J."/>
            <person name="Xu J."/>
            <person name="Wang Y."/>
            <person name="Yuan Z."/>
            <person name="Wen Y."/>
            <person name="Yao Z."/>
            <person name="Shen Y."/>
            <person name="Qiang B."/>
            <person name="Hou Y."/>
            <person name="Yu J."/>
            <person name="Jin Q."/>
        </authorList>
    </citation>
    <scope>NUCLEOTIDE SEQUENCE [LARGE SCALE GENOMIC DNA]</scope>
    <source>
        <strain>Ss046</strain>
    </source>
</reference>
<name>RS5_SHISS</name>
<feature type="chain" id="PRO_0000230370" description="Small ribosomal subunit protein uS5">
    <location>
        <begin position="1"/>
        <end position="167"/>
    </location>
</feature>
<feature type="domain" description="S5 DRBM" evidence="1">
    <location>
        <begin position="11"/>
        <end position="74"/>
    </location>
</feature>
<organism>
    <name type="scientific">Shigella sonnei (strain Ss046)</name>
    <dbReference type="NCBI Taxonomy" id="300269"/>
    <lineage>
        <taxon>Bacteria</taxon>
        <taxon>Pseudomonadati</taxon>
        <taxon>Pseudomonadota</taxon>
        <taxon>Gammaproteobacteria</taxon>
        <taxon>Enterobacterales</taxon>
        <taxon>Enterobacteriaceae</taxon>
        <taxon>Shigella</taxon>
    </lineage>
</organism>
<gene>
    <name evidence="1" type="primary">rpsE</name>
    <name type="ordered locus">SSON_3444</name>
</gene>
<evidence type="ECO:0000255" key="1">
    <source>
        <dbReference type="HAMAP-Rule" id="MF_01307"/>
    </source>
</evidence>
<evidence type="ECO:0000305" key="2"/>
<comment type="function">
    <text evidence="1">With S4 and S12 plays an important role in translational accuracy.</text>
</comment>
<comment type="function">
    <text evidence="1">Located at the back of the 30S subunit body where it stabilizes the conformation of the head with respect to the body.</text>
</comment>
<comment type="subunit">
    <text evidence="1">Part of the 30S ribosomal subunit. Contacts proteins S4 and S8.</text>
</comment>
<comment type="domain">
    <text>The N-terminal domain interacts with the head of the 30S subunit; the C-terminal domain interacts with the body and contacts protein S4. The interaction surface between S4 and S5 is involved in control of translational fidelity.</text>
</comment>
<comment type="similarity">
    <text evidence="1">Belongs to the universal ribosomal protein uS5 family.</text>
</comment>
<protein>
    <recommendedName>
        <fullName evidence="1">Small ribosomal subunit protein uS5</fullName>
    </recommendedName>
    <alternativeName>
        <fullName evidence="2">30S ribosomal protein S5</fullName>
    </alternativeName>
</protein>